<reference key="1">
    <citation type="journal article" date="2010" name="Environ. Microbiol.">
        <title>The genome of Syntrophomonas wolfei: new insights into syntrophic metabolism and biohydrogen production.</title>
        <authorList>
            <person name="Sieber J.R."/>
            <person name="Sims D.R."/>
            <person name="Han C."/>
            <person name="Kim E."/>
            <person name="Lykidis A."/>
            <person name="Lapidus A.L."/>
            <person name="McDonnald E."/>
            <person name="Rohlin L."/>
            <person name="Culley D.E."/>
            <person name="Gunsalus R."/>
            <person name="McInerney M.J."/>
        </authorList>
    </citation>
    <scope>NUCLEOTIDE SEQUENCE [LARGE SCALE GENOMIC DNA]</scope>
    <source>
        <strain>DSM 2245B / Goettingen</strain>
    </source>
</reference>
<feature type="chain" id="PRO_1000008657" description="4-hydroxy-tetrahydrodipicolinate reductase">
    <location>
        <begin position="1"/>
        <end position="266"/>
    </location>
</feature>
<feature type="active site" description="Proton donor/acceptor" evidence="1">
    <location>
        <position position="156"/>
    </location>
</feature>
<feature type="active site" description="Proton donor" evidence="1">
    <location>
        <position position="160"/>
    </location>
</feature>
<feature type="binding site" evidence="1">
    <location>
        <begin position="11"/>
        <end position="16"/>
    </location>
    <ligand>
        <name>NAD(+)</name>
        <dbReference type="ChEBI" id="CHEBI:57540"/>
    </ligand>
</feature>
<feature type="binding site" evidence="1">
    <location>
        <position position="39"/>
    </location>
    <ligand>
        <name>NADP(+)</name>
        <dbReference type="ChEBI" id="CHEBI:58349"/>
    </ligand>
</feature>
<feature type="binding site" evidence="1">
    <location>
        <begin position="100"/>
        <end position="102"/>
    </location>
    <ligand>
        <name>NAD(+)</name>
        <dbReference type="ChEBI" id="CHEBI:57540"/>
    </ligand>
</feature>
<feature type="binding site" evidence="1">
    <location>
        <position position="157"/>
    </location>
    <ligand>
        <name>(S)-2,3,4,5-tetrahydrodipicolinate</name>
        <dbReference type="ChEBI" id="CHEBI:16845"/>
    </ligand>
</feature>
<feature type="binding site" evidence="1">
    <location>
        <begin position="166"/>
        <end position="167"/>
    </location>
    <ligand>
        <name>(S)-2,3,4,5-tetrahydrodipicolinate</name>
        <dbReference type="ChEBI" id="CHEBI:16845"/>
    </ligand>
</feature>
<accession>Q0AXH2</accession>
<evidence type="ECO:0000255" key="1">
    <source>
        <dbReference type="HAMAP-Rule" id="MF_00102"/>
    </source>
</evidence>
<evidence type="ECO:0000305" key="2"/>
<protein>
    <recommendedName>
        <fullName evidence="1">4-hydroxy-tetrahydrodipicolinate reductase</fullName>
        <shortName evidence="1">HTPA reductase</shortName>
        <ecNumber evidence="1">1.17.1.8</ecNumber>
    </recommendedName>
</protein>
<name>DAPB_SYNWW</name>
<organism>
    <name type="scientific">Syntrophomonas wolfei subsp. wolfei (strain DSM 2245B / Goettingen)</name>
    <dbReference type="NCBI Taxonomy" id="335541"/>
    <lineage>
        <taxon>Bacteria</taxon>
        <taxon>Bacillati</taxon>
        <taxon>Bacillota</taxon>
        <taxon>Clostridia</taxon>
        <taxon>Eubacteriales</taxon>
        <taxon>Syntrophomonadaceae</taxon>
        <taxon>Syntrophomonas</taxon>
    </lineage>
</organism>
<comment type="function">
    <text evidence="1">Catalyzes the conversion of 4-hydroxy-tetrahydrodipicolinate (HTPA) to tetrahydrodipicolinate.</text>
</comment>
<comment type="catalytic activity">
    <reaction evidence="1">
        <text>(S)-2,3,4,5-tetrahydrodipicolinate + NAD(+) + H2O = (2S,4S)-4-hydroxy-2,3,4,5-tetrahydrodipicolinate + NADH + H(+)</text>
        <dbReference type="Rhea" id="RHEA:35323"/>
        <dbReference type="ChEBI" id="CHEBI:15377"/>
        <dbReference type="ChEBI" id="CHEBI:15378"/>
        <dbReference type="ChEBI" id="CHEBI:16845"/>
        <dbReference type="ChEBI" id="CHEBI:57540"/>
        <dbReference type="ChEBI" id="CHEBI:57945"/>
        <dbReference type="ChEBI" id="CHEBI:67139"/>
        <dbReference type="EC" id="1.17.1.8"/>
    </reaction>
</comment>
<comment type="catalytic activity">
    <reaction evidence="1">
        <text>(S)-2,3,4,5-tetrahydrodipicolinate + NADP(+) + H2O = (2S,4S)-4-hydroxy-2,3,4,5-tetrahydrodipicolinate + NADPH + H(+)</text>
        <dbReference type="Rhea" id="RHEA:35331"/>
        <dbReference type="ChEBI" id="CHEBI:15377"/>
        <dbReference type="ChEBI" id="CHEBI:15378"/>
        <dbReference type="ChEBI" id="CHEBI:16845"/>
        <dbReference type="ChEBI" id="CHEBI:57783"/>
        <dbReference type="ChEBI" id="CHEBI:58349"/>
        <dbReference type="ChEBI" id="CHEBI:67139"/>
        <dbReference type="EC" id="1.17.1.8"/>
    </reaction>
</comment>
<comment type="pathway">
    <text evidence="1">Amino-acid biosynthesis; L-lysine biosynthesis via DAP pathway; (S)-tetrahydrodipicolinate from L-aspartate: step 4/4.</text>
</comment>
<comment type="subcellular location">
    <subcellularLocation>
        <location evidence="1">Cytoplasm</location>
    </subcellularLocation>
</comment>
<comment type="similarity">
    <text evidence="1">Belongs to the DapB family.</text>
</comment>
<comment type="caution">
    <text evidence="2">Was originally thought to be a dihydrodipicolinate reductase (DHDPR), catalyzing the conversion of dihydrodipicolinate to tetrahydrodipicolinate. However, it was shown in E.coli that the substrate of the enzymatic reaction is not dihydrodipicolinate (DHDP) but in fact (2S,4S)-4-hydroxy-2,3,4,5-tetrahydrodipicolinic acid (HTPA), the product released by the DapA-catalyzed reaction.</text>
</comment>
<sequence length="266" mass="28905">MKQKARVIVAGALGKMGKETLKAIAGDEELELIAAVDIKAKGEKVADLIGIAGLDISLENDLDEVLENYQPDVLVDFTNPQAVFNNARSALKIGVFCVIGTTGLNEIEIKELEKLAGEKQVGVAIIPNFAIGAVLMMKFASEAAKYFPEVEIIELHHDQKMDAPSGTAIKTAEMINANRPLRPPRNVREFEKIAGCRGGDLGQVRIHSVRLPGLIAHQEVIFGGAGQGLKIRHDSFDRAGFMPGVVMVIKKILQRKELVYGMENLL</sequence>
<keyword id="KW-0028">Amino-acid biosynthesis</keyword>
<keyword id="KW-0963">Cytoplasm</keyword>
<keyword id="KW-0220">Diaminopimelate biosynthesis</keyword>
<keyword id="KW-0457">Lysine biosynthesis</keyword>
<keyword id="KW-0520">NAD</keyword>
<keyword id="KW-0521">NADP</keyword>
<keyword id="KW-0560">Oxidoreductase</keyword>
<keyword id="KW-1185">Reference proteome</keyword>
<proteinExistence type="inferred from homology"/>
<dbReference type="EC" id="1.17.1.8" evidence="1"/>
<dbReference type="EMBL" id="CP000448">
    <property type="protein sequence ID" value="ABI68582.1"/>
    <property type="molecule type" value="Genomic_DNA"/>
</dbReference>
<dbReference type="RefSeq" id="WP_011640684.1">
    <property type="nucleotide sequence ID" value="NC_008346.1"/>
</dbReference>
<dbReference type="SMR" id="Q0AXH2"/>
<dbReference type="STRING" id="335541.Swol_1273"/>
<dbReference type="KEGG" id="swo:Swol_1273"/>
<dbReference type="eggNOG" id="COG0289">
    <property type="taxonomic scope" value="Bacteria"/>
</dbReference>
<dbReference type="HOGENOM" id="CLU_047479_0_1_9"/>
<dbReference type="OrthoDB" id="9790352at2"/>
<dbReference type="UniPathway" id="UPA00034">
    <property type="reaction ID" value="UER00018"/>
</dbReference>
<dbReference type="Proteomes" id="UP000001968">
    <property type="component" value="Chromosome"/>
</dbReference>
<dbReference type="GO" id="GO:0005829">
    <property type="term" value="C:cytosol"/>
    <property type="evidence" value="ECO:0007669"/>
    <property type="project" value="TreeGrafter"/>
</dbReference>
<dbReference type="GO" id="GO:0008839">
    <property type="term" value="F:4-hydroxy-tetrahydrodipicolinate reductase"/>
    <property type="evidence" value="ECO:0007669"/>
    <property type="project" value="UniProtKB-EC"/>
</dbReference>
<dbReference type="GO" id="GO:0051287">
    <property type="term" value="F:NAD binding"/>
    <property type="evidence" value="ECO:0007669"/>
    <property type="project" value="UniProtKB-UniRule"/>
</dbReference>
<dbReference type="GO" id="GO:0050661">
    <property type="term" value="F:NADP binding"/>
    <property type="evidence" value="ECO:0007669"/>
    <property type="project" value="UniProtKB-UniRule"/>
</dbReference>
<dbReference type="GO" id="GO:0016726">
    <property type="term" value="F:oxidoreductase activity, acting on CH or CH2 groups, NAD or NADP as acceptor"/>
    <property type="evidence" value="ECO:0007669"/>
    <property type="project" value="UniProtKB-UniRule"/>
</dbReference>
<dbReference type="GO" id="GO:0019877">
    <property type="term" value="P:diaminopimelate biosynthetic process"/>
    <property type="evidence" value="ECO:0007669"/>
    <property type="project" value="UniProtKB-UniRule"/>
</dbReference>
<dbReference type="GO" id="GO:0009089">
    <property type="term" value="P:lysine biosynthetic process via diaminopimelate"/>
    <property type="evidence" value="ECO:0007669"/>
    <property type="project" value="UniProtKB-UniRule"/>
</dbReference>
<dbReference type="CDD" id="cd02274">
    <property type="entry name" value="DHDPR_N"/>
    <property type="match status" value="1"/>
</dbReference>
<dbReference type="FunFam" id="3.30.360.10:FF:000009">
    <property type="entry name" value="4-hydroxy-tetrahydrodipicolinate reductase"/>
    <property type="match status" value="1"/>
</dbReference>
<dbReference type="Gene3D" id="3.30.360.10">
    <property type="entry name" value="Dihydrodipicolinate Reductase, domain 2"/>
    <property type="match status" value="1"/>
</dbReference>
<dbReference type="Gene3D" id="3.40.50.720">
    <property type="entry name" value="NAD(P)-binding Rossmann-like Domain"/>
    <property type="match status" value="1"/>
</dbReference>
<dbReference type="HAMAP" id="MF_00102">
    <property type="entry name" value="DapB"/>
    <property type="match status" value="1"/>
</dbReference>
<dbReference type="InterPro" id="IPR022663">
    <property type="entry name" value="DapB_C"/>
</dbReference>
<dbReference type="InterPro" id="IPR000846">
    <property type="entry name" value="DapB_N"/>
</dbReference>
<dbReference type="InterPro" id="IPR022664">
    <property type="entry name" value="DapB_N_CS"/>
</dbReference>
<dbReference type="InterPro" id="IPR023940">
    <property type="entry name" value="DHDPR_bac"/>
</dbReference>
<dbReference type="InterPro" id="IPR036291">
    <property type="entry name" value="NAD(P)-bd_dom_sf"/>
</dbReference>
<dbReference type="NCBIfam" id="TIGR00036">
    <property type="entry name" value="dapB"/>
    <property type="match status" value="1"/>
</dbReference>
<dbReference type="PANTHER" id="PTHR20836:SF0">
    <property type="entry name" value="4-HYDROXY-TETRAHYDRODIPICOLINATE REDUCTASE 1, CHLOROPLASTIC-RELATED"/>
    <property type="match status" value="1"/>
</dbReference>
<dbReference type="PANTHER" id="PTHR20836">
    <property type="entry name" value="DIHYDRODIPICOLINATE REDUCTASE"/>
    <property type="match status" value="1"/>
</dbReference>
<dbReference type="Pfam" id="PF05173">
    <property type="entry name" value="DapB_C"/>
    <property type="match status" value="1"/>
</dbReference>
<dbReference type="Pfam" id="PF01113">
    <property type="entry name" value="DapB_N"/>
    <property type="match status" value="1"/>
</dbReference>
<dbReference type="PIRSF" id="PIRSF000161">
    <property type="entry name" value="DHPR"/>
    <property type="match status" value="1"/>
</dbReference>
<dbReference type="SUPFAM" id="SSF55347">
    <property type="entry name" value="Glyceraldehyde-3-phosphate dehydrogenase-like, C-terminal domain"/>
    <property type="match status" value="1"/>
</dbReference>
<dbReference type="SUPFAM" id="SSF51735">
    <property type="entry name" value="NAD(P)-binding Rossmann-fold domains"/>
    <property type="match status" value="1"/>
</dbReference>
<dbReference type="PROSITE" id="PS01298">
    <property type="entry name" value="DAPB"/>
    <property type="match status" value="1"/>
</dbReference>
<gene>
    <name evidence="1" type="primary">dapB</name>
    <name type="ordered locus">Swol_1273</name>
</gene>